<accession>Q6ZJJ0</accession>
<accession>A0A0P0XI61</accession>
<keyword id="KW-0052">Apoplast</keyword>
<keyword id="KW-0325">Glycoprotein</keyword>
<keyword id="KW-0326">Glycosidase</keyword>
<keyword id="KW-0378">Hydrolase</keyword>
<keyword id="KW-1185">Reference proteome</keyword>
<keyword id="KW-0964">Secreted</keyword>
<keyword id="KW-0732">Signal</keyword>
<comment type="catalytic activity">
    <reaction>
        <text>Hydrolysis of terminal non-reducing beta-D-galactose residues in beta-D-galactosides.</text>
        <dbReference type="EC" id="3.2.1.23"/>
    </reaction>
</comment>
<comment type="subcellular location">
    <subcellularLocation>
        <location evidence="3">Secreted</location>
        <location evidence="3">Extracellular space</location>
        <location evidence="3">Apoplast</location>
    </subcellularLocation>
</comment>
<comment type="similarity">
    <text evidence="3">Belongs to the glycosyl hydrolase 35 family.</text>
</comment>
<protein>
    <recommendedName>
        <fullName>Beta-galactosidase 11</fullName>
        <ecNumber>3.2.1.23</ecNumber>
    </recommendedName>
    <alternativeName>
        <fullName>Lactase 115</fullName>
    </alternativeName>
</protein>
<evidence type="ECO:0000255" key="1"/>
<evidence type="ECO:0000255" key="2">
    <source>
        <dbReference type="PROSITE-ProRule" id="PRU00260"/>
    </source>
</evidence>
<evidence type="ECO:0000305" key="3"/>
<organism>
    <name type="scientific">Oryza sativa subsp. japonica</name>
    <name type="common">Rice</name>
    <dbReference type="NCBI Taxonomy" id="39947"/>
    <lineage>
        <taxon>Eukaryota</taxon>
        <taxon>Viridiplantae</taxon>
        <taxon>Streptophyta</taxon>
        <taxon>Embryophyta</taxon>
        <taxon>Tracheophyta</taxon>
        <taxon>Spermatophyta</taxon>
        <taxon>Magnoliopsida</taxon>
        <taxon>Liliopsida</taxon>
        <taxon>Poales</taxon>
        <taxon>Poaceae</taxon>
        <taxon>BOP clade</taxon>
        <taxon>Oryzoideae</taxon>
        <taxon>Oryzeae</taxon>
        <taxon>Oryzinae</taxon>
        <taxon>Oryza</taxon>
        <taxon>Oryza sativa</taxon>
    </lineage>
</organism>
<proteinExistence type="evidence at transcript level"/>
<sequence length="848" mass="94739">MSAAAVLAVVAAAVAALAAAASGYELTKNGTVITYDRRSLIIDGHREIFFSGSIHYPRSPPDTWPDLISKAKEGGLNVIESYVFWNGHEPEQGVYNFEGRYDLIKFFKLIQEKEMYAIVRIGPFVQAEWNHGGLPYWLREIPDIIFRTNNEPFKKYMKQFVTLIVNKLKEAKLFASQGGPIILAQIENEYQHLEVAFKEAGTKYINWAAKMAIATNTGVPWIMCKQTKAPGEVIPTCNGRHCGDTWPGPADKKKPLLWTENWTAQYRVFGDPPSQRSAEDIAFSVARFFSVGGTMANYYMYHGGTNFGRNGAAFVMPRYYDEAPLDEFGLYKEPKWGHLRDLHHALRHCKKALLWGNPSVQPLGKLYEARVFEMKEKNVCVAFLSNHNTKEDGTVTFRGQKYFVARRSISILADCKTVVFSTQHVNSQHNQRTFHFADQTVQDNVWEMYSEEKIPRYSKTSIRTQRPLEQYNQTKDKTDYLWYTTSFRLETDDLPYRKEVKPVLEVSSHGHAIVAFVNDAFVGCGHGTKINKAFTMEKAMDLKVGVNHVAILSSTLGLMDSGSYLEHRMAGVYTVTIRGLNTGTLDLTTNGWGHVVGLDGERRRVHSEQGMGAVAWKPGKDNQPLTWYRRRFDPPSGTDPVVIDLTPMGKGFLFVNGEGLGRYWVSYHHALGKPSQYLYHVPRSLLRPKGNTLMFFEEEGGKPDAIMILTVKRDNICTFMTEKNPAHVRWSWESKDSQPKAVAGAGAGAGGLKPTAVLSCPTKKTIQSVVFASYGNPLGICGNYTVGSCHAPRTKEVVEKACIGRKTCSLVVSSEVYGGDVHCPGTTGTLAVQAKCSKRPPRSAATAQ</sequence>
<gene>
    <name type="ordered locus">Os08g0549200</name>
    <name type="ordered locus">LOC_Os08g43570</name>
    <name type="ORF">OJ1479_B11.10</name>
</gene>
<dbReference type="EC" id="3.2.1.23"/>
<dbReference type="EMBL" id="AP003912">
    <property type="protein sequence ID" value="BAD08952.1"/>
    <property type="molecule type" value="Genomic_DNA"/>
</dbReference>
<dbReference type="EMBL" id="AP008214">
    <property type="protein sequence ID" value="BAF24354.1"/>
    <property type="molecule type" value="Genomic_DNA"/>
</dbReference>
<dbReference type="EMBL" id="AP014964">
    <property type="protein sequence ID" value="BAT06573.1"/>
    <property type="molecule type" value="Genomic_DNA"/>
</dbReference>
<dbReference type="EMBL" id="AK069066">
    <property type="status" value="NOT_ANNOTATED_CDS"/>
    <property type="molecule type" value="mRNA"/>
</dbReference>
<dbReference type="RefSeq" id="XP_015650676.1">
    <property type="nucleotide sequence ID" value="XM_015795190.1"/>
</dbReference>
<dbReference type="SMR" id="Q6ZJJ0"/>
<dbReference type="FunCoup" id="Q6ZJJ0">
    <property type="interactions" value="12"/>
</dbReference>
<dbReference type="STRING" id="39947.Q6ZJJ0"/>
<dbReference type="CAZy" id="GH35">
    <property type="family name" value="Glycoside Hydrolase Family 35"/>
</dbReference>
<dbReference type="PaxDb" id="39947-Q6ZJJ0"/>
<dbReference type="EnsemblPlants" id="Os08t0549200-01">
    <property type="protein sequence ID" value="Os08t0549200-01"/>
    <property type="gene ID" value="Os08g0549200"/>
</dbReference>
<dbReference type="Gramene" id="Os08t0549200-01">
    <property type="protein sequence ID" value="Os08t0549200-01"/>
    <property type="gene ID" value="Os08g0549200"/>
</dbReference>
<dbReference type="KEGG" id="dosa:Os08g0549200"/>
<dbReference type="eggNOG" id="KOG0496">
    <property type="taxonomic scope" value="Eukaryota"/>
</dbReference>
<dbReference type="HOGENOM" id="CLU_007853_4_1_1"/>
<dbReference type="InParanoid" id="Q6ZJJ0"/>
<dbReference type="OMA" id="FEYHIPR"/>
<dbReference type="OrthoDB" id="1657402at2759"/>
<dbReference type="Proteomes" id="UP000000763">
    <property type="component" value="Chromosome 8"/>
</dbReference>
<dbReference type="Proteomes" id="UP000059680">
    <property type="component" value="Chromosome 8"/>
</dbReference>
<dbReference type="ExpressionAtlas" id="Q6ZJJ0">
    <property type="expression patterns" value="baseline and differential"/>
</dbReference>
<dbReference type="GO" id="GO:0048046">
    <property type="term" value="C:apoplast"/>
    <property type="evidence" value="ECO:0007669"/>
    <property type="project" value="UniProtKB-SubCell"/>
</dbReference>
<dbReference type="GO" id="GO:0009505">
    <property type="term" value="C:plant-type cell wall"/>
    <property type="evidence" value="ECO:0000318"/>
    <property type="project" value="GO_Central"/>
</dbReference>
<dbReference type="GO" id="GO:0005773">
    <property type="term" value="C:vacuole"/>
    <property type="evidence" value="ECO:0000318"/>
    <property type="project" value="GO_Central"/>
</dbReference>
<dbReference type="GO" id="GO:0004565">
    <property type="term" value="F:beta-galactosidase activity"/>
    <property type="evidence" value="ECO:0000318"/>
    <property type="project" value="GO_Central"/>
</dbReference>
<dbReference type="GO" id="GO:0030246">
    <property type="term" value="F:carbohydrate binding"/>
    <property type="evidence" value="ECO:0007669"/>
    <property type="project" value="InterPro"/>
</dbReference>
<dbReference type="GO" id="GO:0019388">
    <property type="term" value="P:galactose catabolic process"/>
    <property type="evidence" value="ECO:0000318"/>
    <property type="project" value="GO_Central"/>
</dbReference>
<dbReference type="GO" id="GO:0009827">
    <property type="term" value="P:plant-type cell wall modification"/>
    <property type="evidence" value="ECO:0000318"/>
    <property type="project" value="GO_Central"/>
</dbReference>
<dbReference type="CDD" id="cd22842">
    <property type="entry name" value="Gal_Rha_Lectin_BGal"/>
    <property type="match status" value="1"/>
</dbReference>
<dbReference type="FunFam" id="2.60.120.260:FF:000050">
    <property type="entry name" value="Beta-galactosidase"/>
    <property type="match status" value="1"/>
</dbReference>
<dbReference type="FunFam" id="2.60.120.740:FF:000002">
    <property type="entry name" value="Beta-galactosidase"/>
    <property type="match status" value="1"/>
</dbReference>
<dbReference type="FunFam" id="3.20.20.80:FF:000006">
    <property type="entry name" value="Beta-galactosidase"/>
    <property type="match status" value="1"/>
</dbReference>
<dbReference type="Gene3D" id="2.60.120.740">
    <property type="match status" value="1"/>
</dbReference>
<dbReference type="Gene3D" id="2.60.120.260">
    <property type="entry name" value="Galactose-binding domain-like"/>
    <property type="match status" value="1"/>
</dbReference>
<dbReference type="Gene3D" id="3.20.20.80">
    <property type="entry name" value="Glycosidases"/>
    <property type="match status" value="1"/>
</dbReference>
<dbReference type="InterPro" id="IPR048913">
    <property type="entry name" value="BetaGal_gal-bd"/>
</dbReference>
<dbReference type="InterPro" id="IPR008979">
    <property type="entry name" value="Galactose-bd-like_sf"/>
</dbReference>
<dbReference type="InterPro" id="IPR041392">
    <property type="entry name" value="GHD"/>
</dbReference>
<dbReference type="InterPro" id="IPR031330">
    <property type="entry name" value="Gly_Hdrlase_35_cat"/>
</dbReference>
<dbReference type="InterPro" id="IPR019801">
    <property type="entry name" value="Glyco_hydro_35_CS"/>
</dbReference>
<dbReference type="InterPro" id="IPR001944">
    <property type="entry name" value="Glycoside_Hdrlase_35"/>
</dbReference>
<dbReference type="InterPro" id="IPR017853">
    <property type="entry name" value="Glycoside_hydrolase_SF"/>
</dbReference>
<dbReference type="InterPro" id="IPR000922">
    <property type="entry name" value="Lectin_gal-bd_dom"/>
</dbReference>
<dbReference type="InterPro" id="IPR043159">
    <property type="entry name" value="Lectin_gal-bd_sf"/>
</dbReference>
<dbReference type="PANTHER" id="PTHR23421">
    <property type="entry name" value="BETA-GALACTOSIDASE RELATED"/>
    <property type="match status" value="1"/>
</dbReference>
<dbReference type="Pfam" id="PF21467">
    <property type="entry name" value="BetaGal_gal-bd"/>
    <property type="match status" value="1"/>
</dbReference>
<dbReference type="Pfam" id="PF17834">
    <property type="entry name" value="GHD"/>
    <property type="match status" value="1"/>
</dbReference>
<dbReference type="Pfam" id="PF01301">
    <property type="entry name" value="Glyco_hydro_35"/>
    <property type="match status" value="1"/>
</dbReference>
<dbReference type="Pfam" id="PF02140">
    <property type="entry name" value="SUEL_Lectin"/>
    <property type="match status" value="1"/>
</dbReference>
<dbReference type="PRINTS" id="PR00742">
    <property type="entry name" value="GLHYDRLASE35"/>
</dbReference>
<dbReference type="SUPFAM" id="SSF51445">
    <property type="entry name" value="(Trans)glycosidases"/>
    <property type="match status" value="1"/>
</dbReference>
<dbReference type="SUPFAM" id="SSF49785">
    <property type="entry name" value="Galactose-binding domain-like"/>
    <property type="match status" value="2"/>
</dbReference>
<dbReference type="PROSITE" id="PS01182">
    <property type="entry name" value="GLYCOSYL_HYDROL_F35"/>
    <property type="match status" value="1"/>
</dbReference>
<dbReference type="PROSITE" id="PS50228">
    <property type="entry name" value="SUEL_LECTIN"/>
    <property type="match status" value="1"/>
</dbReference>
<feature type="signal peptide" evidence="1">
    <location>
        <begin position="1"/>
        <end position="23"/>
    </location>
</feature>
<feature type="chain" id="PRO_0000294163" description="Beta-galactosidase 11">
    <location>
        <begin position="24"/>
        <end position="848"/>
    </location>
</feature>
<feature type="domain" description="SUEL-type lectin" evidence="2">
    <location>
        <begin position="750"/>
        <end position="837"/>
    </location>
</feature>
<feature type="active site" description="Proton donor" evidence="1">
    <location>
        <position position="189"/>
    </location>
</feature>
<feature type="active site" description="Nucleophile" evidence="1">
    <location>
        <position position="260"/>
    </location>
</feature>
<feature type="glycosylation site" description="N-linked (GlcNAc...) asparagine" evidence="1">
    <location>
        <position position="29"/>
    </location>
</feature>
<feature type="glycosylation site" description="N-linked (GlcNAc...) asparagine" evidence="1">
    <location>
        <position position="261"/>
    </location>
</feature>
<feature type="glycosylation site" description="N-linked (GlcNAc...) asparagine" evidence="1">
    <location>
        <position position="472"/>
    </location>
</feature>
<feature type="glycosylation site" description="N-linked (GlcNAc...) asparagine" evidence="1">
    <location>
        <position position="783"/>
    </location>
</feature>
<feature type="sequence conflict" description="In Ref. 4; AK069066." evidence="3" ref="4">
    <original>D</original>
    <variation>N</variation>
    <location>
        <position position="560"/>
    </location>
</feature>
<feature type="sequence conflict" description="In Ref. 4; AK069066." evidence="3" ref="4">
    <original>G</original>
    <variation>R</variation>
    <location>
        <position position="571"/>
    </location>
</feature>
<name>BGA11_ORYSJ</name>
<reference key="1">
    <citation type="journal article" date="2005" name="Nature">
        <title>The map-based sequence of the rice genome.</title>
        <authorList>
            <consortium name="International rice genome sequencing project (IRGSP)"/>
        </authorList>
    </citation>
    <scope>NUCLEOTIDE SEQUENCE [LARGE SCALE GENOMIC DNA]</scope>
    <source>
        <strain>cv. Nipponbare</strain>
    </source>
</reference>
<reference key="2">
    <citation type="journal article" date="2008" name="Nucleic Acids Res.">
        <title>The rice annotation project database (RAP-DB): 2008 update.</title>
        <authorList>
            <consortium name="The rice annotation project (RAP)"/>
        </authorList>
    </citation>
    <scope>GENOME REANNOTATION</scope>
    <source>
        <strain>cv. Nipponbare</strain>
    </source>
</reference>
<reference key="3">
    <citation type="journal article" date="2013" name="Rice">
        <title>Improvement of the Oryza sativa Nipponbare reference genome using next generation sequence and optical map data.</title>
        <authorList>
            <person name="Kawahara Y."/>
            <person name="de la Bastide M."/>
            <person name="Hamilton J.P."/>
            <person name="Kanamori H."/>
            <person name="McCombie W.R."/>
            <person name="Ouyang S."/>
            <person name="Schwartz D.C."/>
            <person name="Tanaka T."/>
            <person name="Wu J."/>
            <person name="Zhou S."/>
            <person name="Childs K.L."/>
            <person name="Davidson R.M."/>
            <person name="Lin H."/>
            <person name="Quesada-Ocampo L."/>
            <person name="Vaillancourt B."/>
            <person name="Sakai H."/>
            <person name="Lee S.S."/>
            <person name="Kim J."/>
            <person name="Numa H."/>
            <person name="Itoh T."/>
            <person name="Buell C.R."/>
            <person name="Matsumoto T."/>
        </authorList>
    </citation>
    <scope>GENOME REANNOTATION</scope>
    <source>
        <strain>cv. Nipponbare</strain>
    </source>
</reference>
<reference key="4">
    <citation type="journal article" date="2003" name="Science">
        <title>Collection, mapping, and annotation of over 28,000 cDNA clones from japonica rice.</title>
        <authorList>
            <consortium name="The rice full-length cDNA consortium"/>
        </authorList>
    </citation>
    <scope>NUCLEOTIDE SEQUENCE [LARGE SCALE MRNA]</scope>
    <source>
        <strain>cv. Nipponbare</strain>
    </source>
</reference>